<protein>
    <recommendedName>
        <fullName evidence="2">ATP-dependent dethiobiotin synthetase BioD</fullName>
        <ecNumber evidence="2">6.3.3.3</ecNumber>
    </recommendedName>
    <alternativeName>
        <fullName evidence="2">DTB synthetase</fullName>
        <shortName evidence="2">DTBS</shortName>
    </alternativeName>
    <alternativeName>
        <fullName evidence="2">Dethiobiotin synthase</fullName>
    </alternativeName>
</protein>
<accession>I3R9K1</accession>
<proteinExistence type="inferred from homology"/>
<keyword id="KW-0067">ATP-binding</keyword>
<keyword id="KW-0093">Biotin biosynthesis</keyword>
<keyword id="KW-0963">Cytoplasm</keyword>
<keyword id="KW-0436">Ligase</keyword>
<keyword id="KW-0460">Magnesium</keyword>
<keyword id="KW-0479">Metal-binding</keyword>
<keyword id="KW-0547">Nucleotide-binding</keyword>
<keyword id="KW-0614">Plasmid</keyword>
<organism>
    <name type="scientific">Haloferax mediterranei (strain ATCC 33500 / DSM 1411 / JCM 8866 / NBRC 14739 / NCIMB 2177 / R-4)</name>
    <name type="common">Halobacterium mediterranei</name>
    <dbReference type="NCBI Taxonomy" id="523841"/>
    <lineage>
        <taxon>Archaea</taxon>
        <taxon>Methanobacteriati</taxon>
        <taxon>Methanobacteriota</taxon>
        <taxon>Stenosarchaea group</taxon>
        <taxon>Halobacteria</taxon>
        <taxon>Halobacteriales</taxon>
        <taxon>Haloferacaceae</taxon>
        <taxon>Haloferax</taxon>
    </lineage>
</organism>
<reference key="1">
    <citation type="journal article" date="2012" name="J. Bacteriol.">
        <title>Complete genome sequence of the metabolically versatile halophilic archaeon Haloferax mediterranei, a poly(3-hydroxybutyrate-co-3-hydroxyvalerate) producer.</title>
        <authorList>
            <person name="Han J."/>
            <person name="Zhang F."/>
            <person name="Hou J."/>
            <person name="Liu X."/>
            <person name="Li M."/>
            <person name="Liu H."/>
            <person name="Cai L."/>
            <person name="Zhang B."/>
            <person name="Chen Y."/>
            <person name="Zhou J."/>
            <person name="Hu S."/>
            <person name="Xiang H."/>
        </authorList>
    </citation>
    <scope>NUCLEOTIDE SEQUENCE [LARGE SCALE GENOMIC DNA]</scope>
    <source>
        <strain>ATCC 33500 / DSM 1411 / JCM 8866 / NBRC 14739 / NCIMB 2177 / R-4</strain>
        <plasmid evidence="4">pHM300</plasmid>
    </source>
</reference>
<reference key="2">
    <citation type="journal article" date="2014" name="PLoS Genet.">
        <title>Phylogenetically driven sequencing of extremely halophilic archaea reveals strategies for static and dynamic osmo-response.</title>
        <authorList>
            <person name="Becker E.A."/>
            <person name="Seitzer P.M."/>
            <person name="Tritt A."/>
            <person name="Larsen D."/>
            <person name="Krusor M."/>
            <person name="Yao A.I."/>
            <person name="Wu D."/>
            <person name="Madern D."/>
            <person name="Eisen J.A."/>
            <person name="Darling A.E."/>
            <person name="Facciotti M.T."/>
        </authorList>
    </citation>
    <scope>NUCLEOTIDE SEQUENCE [LARGE SCALE GENOMIC DNA]</scope>
    <source>
        <strain>ATCC 33500 / DSM 1411 / JCM 8866 / NBRC 14739 / NCIMB 2177 / R-4</strain>
    </source>
</reference>
<reference key="3">
    <citation type="submission" date="2014-04" db="EMBL/GenBank/DDBJ databases">
        <title>Transcriptional profiles of Haloferax mediterranei on the basis of nitrogen availability.</title>
        <authorList>
            <person name="Bautista V."/>
        </authorList>
    </citation>
    <scope>NUCLEOTIDE SEQUENCE [LARGE SCALE GENOMIC DNA]</scope>
    <source>
        <strain>ATCC 33500 / DSM 1411 / JCM 8866 / NBRC 14739 / NCIMB 2177 / R-4</strain>
        <plasmid>HMPLAS2</plasmid>
    </source>
</reference>
<reference key="4">
    <citation type="submission" date="2019-04" db="EMBL/GenBank/DDBJ databases">
        <title>Methylomes of two halophilic Archaea, Haloarcula marismortui and Haloferax mediterranei.</title>
        <authorList>
            <person name="DasSarma S."/>
            <person name="DasSarma P."/>
            <person name="DasSarma S."/>
            <person name="Fomenkov A."/>
            <person name="Vincze T."/>
            <person name="Anton B.P."/>
            <person name="Roberts R.J."/>
        </authorList>
    </citation>
    <scope>NUCLEOTIDE SEQUENCE [LARGE SCALE GENOMIC DNA]</scope>
    <source>
        <strain>ATCC 33500 / DSM 1411 / JCM 8866 / NBRC 14739 / NCIMB 2177 / R-4</strain>
        <plasmid>pHME322</plasmid>
    </source>
</reference>
<gene>
    <name evidence="2" type="primary">bioD</name>
    <name type="ordered locus">HFX_5076</name>
    <name type="ORF">BM92_18635</name>
    <name type="ORF">C439_00830</name>
    <name type="ORF">E6P09_18700</name>
</gene>
<sequence>MTNITHDFAVVGTDTGVGKTVVTAGLVGWLRNAGHDAQAVKPAQTGYPPDDDAEFVATACGTDAAATCGPRLEPALAPEIAADVADERIDYTAIFETCAAALDRDGPGVIEGIGGLRVPLADGKEVVDLVSELDVPTILVARSGLGTLNHTALSVEALRRRDVFVSGIVLNQFEGETAAERTNPRVLEEMTGCPVYTMPPLSIAKPEDAVAGVCEHLPVEQVLSSVERDPIE</sequence>
<name>BIOD_HALMT</name>
<evidence type="ECO:0000250" key="1">
    <source>
        <dbReference type="UniProtKB" id="Q55849"/>
    </source>
</evidence>
<evidence type="ECO:0000255" key="2">
    <source>
        <dbReference type="HAMAP-Rule" id="MF_00336"/>
    </source>
</evidence>
<evidence type="ECO:0000305" key="3"/>
<evidence type="ECO:0000312" key="4">
    <source>
        <dbReference type="Proteomes" id="UP000006469"/>
    </source>
</evidence>
<comment type="function">
    <text evidence="1 2">Catalyzes a mechanistically unusual reaction, the ATP-dependent insertion of CO2 between the N7 and N8 nitrogen atoms of 7,8-diaminopelargonic acid (DAPA, also called 7,8-diammoniononanoate) to form a ureido ring (By similarity). This archaea does not encode bioA (which catalyzes the formation of the precursor for this reaction in the cannonical pathway), instead it encodes bioU, which replaces bioA and also performs the first half of the cannonical BioD reaction. Thus in this archaea BioD has a different substrate (By similarity).</text>
</comment>
<comment type="catalytic activity">
    <reaction evidence="2">
        <text>(7R,8S)-7,8-diammoniononanoate + CO2 + ATP = (4R,5S)-dethiobiotin + ADP + phosphate + 3 H(+)</text>
        <dbReference type="Rhea" id="RHEA:15805"/>
        <dbReference type="ChEBI" id="CHEBI:15378"/>
        <dbReference type="ChEBI" id="CHEBI:16526"/>
        <dbReference type="ChEBI" id="CHEBI:30616"/>
        <dbReference type="ChEBI" id="CHEBI:43474"/>
        <dbReference type="ChEBI" id="CHEBI:149469"/>
        <dbReference type="ChEBI" id="CHEBI:149473"/>
        <dbReference type="ChEBI" id="CHEBI:456216"/>
        <dbReference type="EC" id="6.3.3.3"/>
    </reaction>
</comment>
<comment type="catalytic activity">
    <reaction evidence="1 3">
        <text>(7R,8S)-8-amino-7-(carboxyamino)nonanoate + ATP = (4R,5S)-dethiobiotin + ADP + phosphate + H(+)</text>
        <dbReference type="Rhea" id="RHEA:63684"/>
        <dbReference type="ChEBI" id="CHEBI:15378"/>
        <dbReference type="ChEBI" id="CHEBI:30616"/>
        <dbReference type="ChEBI" id="CHEBI:43474"/>
        <dbReference type="ChEBI" id="CHEBI:149470"/>
        <dbReference type="ChEBI" id="CHEBI:149473"/>
        <dbReference type="ChEBI" id="CHEBI:456216"/>
    </reaction>
</comment>
<comment type="cofactor">
    <cofactor evidence="2">
        <name>Mg(2+)</name>
        <dbReference type="ChEBI" id="CHEBI:18420"/>
    </cofactor>
</comment>
<comment type="pathway">
    <text evidence="2">Cofactor biosynthesis; biotin biosynthesis; biotin from 7,8-diaminononanoate: step 1/2.</text>
</comment>
<comment type="subunit">
    <text evidence="2">Homodimer.</text>
</comment>
<comment type="subcellular location">
    <subcellularLocation>
        <location evidence="2">Cytoplasm</location>
    </subcellularLocation>
</comment>
<comment type="similarity">
    <text evidence="2">Belongs to the dethiobiotin synthetase family.</text>
</comment>
<dbReference type="EC" id="6.3.3.3" evidence="2"/>
<dbReference type="EMBL" id="CP001870">
    <property type="protein sequence ID" value="AFK20911.1"/>
    <property type="molecule type" value="Genomic_DNA"/>
</dbReference>
<dbReference type="EMBL" id="CP007553">
    <property type="protein sequence ID" value="AHZ24220.1"/>
    <property type="molecule type" value="Genomic_DNA"/>
</dbReference>
<dbReference type="EMBL" id="AOLO01000001">
    <property type="protein sequence ID" value="EMA05299.1"/>
    <property type="molecule type" value="Genomic_DNA"/>
</dbReference>
<dbReference type="EMBL" id="CP039141">
    <property type="protein sequence ID" value="QCQ77340.1"/>
    <property type="molecule type" value="Genomic_DNA"/>
</dbReference>
<dbReference type="RefSeq" id="WP_004056371.1">
    <property type="nucleotide sequence ID" value="NC_017943.1"/>
</dbReference>
<dbReference type="SMR" id="I3R9K1"/>
<dbReference type="GeneID" id="40158491"/>
<dbReference type="KEGG" id="hme:HFX_5076"/>
<dbReference type="PATRIC" id="fig|523841.21.peg.166"/>
<dbReference type="HOGENOM" id="CLU_072551_3_1_2"/>
<dbReference type="OrthoDB" id="201569at2157"/>
<dbReference type="UniPathway" id="UPA00078">
    <property type="reaction ID" value="UER00161"/>
</dbReference>
<dbReference type="Proteomes" id="UP000006469">
    <property type="component" value="Plasmid pHM300"/>
</dbReference>
<dbReference type="Proteomes" id="UP000011603">
    <property type="component" value="Unassembled WGS sequence"/>
</dbReference>
<dbReference type="Proteomes" id="UP000027075">
    <property type="component" value="Plasmid HMPLAS2"/>
</dbReference>
<dbReference type="Proteomes" id="UP000299011">
    <property type="component" value="Plasmid pHME322"/>
</dbReference>
<dbReference type="GO" id="GO:0005829">
    <property type="term" value="C:cytosol"/>
    <property type="evidence" value="ECO:0007669"/>
    <property type="project" value="TreeGrafter"/>
</dbReference>
<dbReference type="GO" id="GO:0005524">
    <property type="term" value="F:ATP binding"/>
    <property type="evidence" value="ECO:0007669"/>
    <property type="project" value="UniProtKB-UniRule"/>
</dbReference>
<dbReference type="GO" id="GO:0004141">
    <property type="term" value="F:dethiobiotin synthase activity"/>
    <property type="evidence" value="ECO:0007669"/>
    <property type="project" value="UniProtKB-UniRule"/>
</dbReference>
<dbReference type="GO" id="GO:0000287">
    <property type="term" value="F:magnesium ion binding"/>
    <property type="evidence" value="ECO:0007669"/>
    <property type="project" value="UniProtKB-UniRule"/>
</dbReference>
<dbReference type="GO" id="GO:0009102">
    <property type="term" value="P:biotin biosynthetic process"/>
    <property type="evidence" value="ECO:0007669"/>
    <property type="project" value="UniProtKB-UniRule"/>
</dbReference>
<dbReference type="CDD" id="cd03109">
    <property type="entry name" value="DTBS"/>
    <property type="match status" value="1"/>
</dbReference>
<dbReference type="Gene3D" id="3.40.50.300">
    <property type="entry name" value="P-loop containing nucleotide triphosphate hydrolases"/>
    <property type="match status" value="1"/>
</dbReference>
<dbReference type="HAMAP" id="MF_00336">
    <property type="entry name" value="BioD"/>
    <property type="match status" value="1"/>
</dbReference>
<dbReference type="InterPro" id="IPR004472">
    <property type="entry name" value="DTB_synth_BioD"/>
</dbReference>
<dbReference type="InterPro" id="IPR027417">
    <property type="entry name" value="P-loop_NTPase"/>
</dbReference>
<dbReference type="NCBIfam" id="TIGR00347">
    <property type="entry name" value="bioD"/>
    <property type="match status" value="1"/>
</dbReference>
<dbReference type="PANTHER" id="PTHR43210">
    <property type="entry name" value="DETHIOBIOTIN SYNTHETASE"/>
    <property type="match status" value="1"/>
</dbReference>
<dbReference type="PANTHER" id="PTHR43210:SF5">
    <property type="entry name" value="DETHIOBIOTIN SYNTHETASE"/>
    <property type="match status" value="1"/>
</dbReference>
<dbReference type="Pfam" id="PF13500">
    <property type="entry name" value="AAA_26"/>
    <property type="match status" value="1"/>
</dbReference>
<dbReference type="PIRSF" id="PIRSF006755">
    <property type="entry name" value="DTB_synth"/>
    <property type="match status" value="1"/>
</dbReference>
<dbReference type="SUPFAM" id="SSF52540">
    <property type="entry name" value="P-loop containing nucleoside triphosphate hydrolases"/>
    <property type="match status" value="1"/>
</dbReference>
<feature type="chain" id="PRO_0000450578" description="ATP-dependent dethiobiotin synthetase BioD">
    <location>
        <begin position="1"/>
        <end position="232"/>
    </location>
</feature>
<feature type="active site" evidence="2">
    <location>
        <position position="41"/>
    </location>
</feature>
<feature type="binding site" evidence="2 3">
    <location>
        <begin position="16"/>
        <end position="21"/>
    </location>
    <ligand>
        <name>ATP</name>
        <dbReference type="ChEBI" id="CHEBI:30616"/>
    </ligand>
</feature>
<feature type="binding site" evidence="2">
    <location>
        <position position="20"/>
    </location>
    <ligand>
        <name>Mg(2+)</name>
        <dbReference type="ChEBI" id="CHEBI:18420"/>
    </ligand>
</feature>
<feature type="binding site" evidence="2">
    <location>
        <position position="45"/>
    </location>
    <ligand>
        <name>substrate</name>
    </ligand>
</feature>
<feature type="binding site" evidence="2">
    <location>
        <position position="52"/>
    </location>
    <ligand>
        <name>ATP</name>
        <dbReference type="ChEBI" id="CHEBI:30616"/>
    </ligand>
</feature>
<feature type="binding site" evidence="2">
    <location>
        <position position="52"/>
    </location>
    <ligand>
        <name>Mg(2+)</name>
        <dbReference type="ChEBI" id="CHEBI:18420"/>
    </ligand>
</feature>
<feature type="binding site" evidence="2">
    <location>
        <begin position="111"/>
        <end position="114"/>
    </location>
    <ligand>
        <name>ATP</name>
        <dbReference type="ChEBI" id="CHEBI:30616"/>
    </ligand>
</feature>
<feature type="binding site" evidence="2">
    <location>
        <position position="111"/>
    </location>
    <ligand>
        <name>Mg(2+)</name>
        <dbReference type="ChEBI" id="CHEBI:18420"/>
    </ligand>
</feature>
<feature type="binding site" evidence="2">
    <location>
        <begin position="171"/>
        <end position="172"/>
    </location>
    <ligand>
        <name>ATP</name>
        <dbReference type="ChEBI" id="CHEBI:30616"/>
    </ligand>
</feature>
<feature type="binding site" evidence="2">
    <location>
        <begin position="200"/>
        <end position="202"/>
    </location>
    <ligand>
        <name>ATP</name>
        <dbReference type="ChEBI" id="CHEBI:30616"/>
    </ligand>
</feature>
<feature type="binding site" evidence="2">
    <location>
        <position position="207"/>
    </location>
    <ligand>
        <name>ATP</name>
        <dbReference type="ChEBI" id="CHEBI:30616"/>
    </ligand>
</feature>
<geneLocation type="plasmid">
    <name>HMPLAS2</name>
</geneLocation>
<geneLocation type="plasmid">
    <name>pHM300</name>
</geneLocation>
<geneLocation type="plasmid">
    <name>pHME322</name>
</geneLocation>